<keyword id="KW-0067">ATP-binding</keyword>
<keyword id="KW-0963">Cytoplasm</keyword>
<keyword id="KW-0418">Kinase</keyword>
<keyword id="KW-0547">Nucleotide-binding</keyword>
<keyword id="KW-1185">Reference proteome</keyword>
<keyword id="KW-0808">Transferase</keyword>
<organism>
    <name type="scientific">Sulfurisphaera tokodaii (strain DSM 16993 / JCM 10545 / NBRC 100140 / 7)</name>
    <name type="common">Sulfolobus tokodaii</name>
    <dbReference type="NCBI Taxonomy" id="273063"/>
    <lineage>
        <taxon>Archaea</taxon>
        <taxon>Thermoproteota</taxon>
        <taxon>Thermoprotei</taxon>
        <taxon>Sulfolobales</taxon>
        <taxon>Sulfolobaceae</taxon>
        <taxon>Sulfurisphaera</taxon>
    </lineage>
</organism>
<proteinExistence type="inferred from homology"/>
<dbReference type="EC" id="2.7.4.3"/>
<dbReference type="EMBL" id="BA000023">
    <property type="protein sequence ID" value="BAK54270.1"/>
    <property type="molecule type" value="Genomic_DNA"/>
</dbReference>
<dbReference type="RefSeq" id="WP_052846302.1">
    <property type="nucleotide sequence ID" value="NC_003106.2"/>
</dbReference>
<dbReference type="SMR" id="Q975K4"/>
<dbReference type="STRING" id="273063.STK_04100"/>
<dbReference type="GeneID" id="1458343"/>
<dbReference type="KEGG" id="sto:STK_04100"/>
<dbReference type="PATRIC" id="fig|273063.9.peg.476"/>
<dbReference type="eggNOG" id="arCOG01039">
    <property type="taxonomic scope" value="Archaea"/>
</dbReference>
<dbReference type="OrthoDB" id="26198at2157"/>
<dbReference type="Proteomes" id="UP000001015">
    <property type="component" value="Chromosome"/>
</dbReference>
<dbReference type="GO" id="GO:0005737">
    <property type="term" value="C:cytoplasm"/>
    <property type="evidence" value="ECO:0007669"/>
    <property type="project" value="UniProtKB-SubCell"/>
</dbReference>
<dbReference type="GO" id="GO:0004017">
    <property type="term" value="F:adenylate kinase activity"/>
    <property type="evidence" value="ECO:0007669"/>
    <property type="project" value="UniProtKB-UniRule"/>
</dbReference>
<dbReference type="GO" id="GO:0005524">
    <property type="term" value="F:ATP binding"/>
    <property type="evidence" value="ECO:0007669"/>
    <property type="project" value="UniProtKB-UniRule"/>
</dbReference>
<dbReference type="Gene3D" id="3.40.50.300">
    <property type="entry name" value="P-loop containing nucleotide triphosphate hydrolases"/>
    <property type="match status" value="1"/>
</dbReference>
<dbReference type="HAMAP" id="MF_00234">
    <property type="entry name" value="Adenylate_kinase_AdkA"/>
    <property type="match status" value="1"/>
</dbReference>
<dbReference type="InterPro" id="IPR023477">
    <property type="entry name" value="Adenylate_kinase_AdkA"/>
</dbReference>
<dbReference type="InterPro" id="IPR027417">
    <property type="entry name" value="P-loop_NTPase"/>
</dbReference>
<dbReference type="NCBIfam" id="NF003122">
    <property type="entry name" value="PRK04040.1"/>
    <property type="match status" value="1"/>
</dbReference>
<dbReference type="Pfam" id="PF13207">
    <property type="entry name" value="AAA_17"/>
    <property type="match status" value="1"/>
</dbReference>
<dbReference type="SUPFAM" id="SSF52540">
    <property type="entry name" value="P-loop containing nucleoside triphosphate hydrolases"/>
    <property type="match status" value="1"/>
</dbReference>
<gene>
    <name type="primary">adkA</name>
    <name type="ordered locus">STK_04100</name>
</gene>
<evidence type="ECO:0000250" key="1"/>
<evidence type="ECO:0000305" key="2"/>
<comment type="catalytic activity">
    <reaction>
        <text>AMP + ATP = 2 ADP</text>
        <dbReference type="Rhea" id="RHEA:12973"/>
        <dbReference type="ChEBI" id="CHEBI:30616"/>
        <dbReference type="ChEBI" id="CHEBI:456215"/>
        <dbReference type="ChEBI" id="CHEBI:456216"/>
        <dbReference type="EC" id="2.7.4.3"/>
    </reaction>
</comment>
<comment type="subcellular location">
    <subcellularLocation>
        <location evidence="1">Cytoplasm</location>
    </subcellularLocation>
</comment>
<comment type="similarity">
    <text evidence="2">Belongs to the archaeal adenylate kinase family.</text>
</comment>
<name>KADA_SULTO</name>
<protein>
    <recommendedName>
        <fullName>Adenylate kinase</fullName>
        <shortName>AK</shortName>
        <ecNumber>2.7.4.3</ecNumber>
    </recommendedName>
    <alternativeName>
        <fullName>ATP-AMP transphosphorylase</fullName>
    </alternativeName>
</protein>
<reference key="1">
    <citation type="journal article" date="2001" name="DNA Res.">
        <title>Complete genome sequence of an aerobic thermoacidophilic Crenarchaeon, Sulfolobus tokodaii strain7.</title>
        <authorList>
            <person name="Kawarabayasi Y."/>
            <person name="Hino Y."/>
            <person name="Horikawa H."/>
            <person name="Jin-no K."/>
            <person name="Takahashi M."/>
            <person name="Sekine M."/>
            <person name="Baba S."/>
            <person name="Ankai A."/>
            <person name="Kosugi H."/>
            <person name="Hosoyama A."/>
            <person name="Fukui S."/>
            <person name="Nagai Y."/>
            <person name="Nishijima K."/>
            <person name="Otsuka R."/>
            <person name="Nakazawa H."/>
            <person name="Takamiya M."/>
            <person name="Kato Y."/>
            <person name="Yoshizawa T."/>
            <person name="Tanaka T."/>
            <person name="Kudoh Y."/>
            <person name="Yamazaki J."/>
            <person name="Kushida N."/>
            <person name="Oguchi A."/>
            <person name="Aoki K."/>
            <person name="Masuda S."/>
            <person name="Yanagii M."/>
            <person name="Nishimura M."/>
            <person name="Yamagishi A."/>
            <person name="Oshima T."/>
            <person name="Kikuchi H."/>
        </authorList>
    </citation>
    <scope>NUCLEOTIDE SEQUENCE [LARGE SCALE GENOMIC DNA]</scope>
    <source>
        <strain>DSM 16993 / JCM 10545 / NBRC 100140 / 7</strain>
    </source>
</reference>
<accession>Q975K4</accession>
<accession>F9VMX3</accession>
<sequence length="194" mass="21447">MKIGIVTGIPGVGKTTVLSKVKEILEEKKINNKIVNYGDYMLMTAMKLGYVNNRDEMRKLPVEKQKQLQIEAARGIANEAKEGGDGLLFIDTHAVIRTPSGYLPGLPKYVIEEINPRVIFLLEADPKVILDRQKRDTSRSRSDYSDERIISETINFARYAAMASAVLVGATVKIVINVEGDPAVAANEIINSML</sequence>
<feature type="chain" id="PRO_0000131827" description="Adenylate kinase">
    <location>
        <begin position="1"/>
        <end position="194"/>
    </location>
</feature>
<feature type="binding site" evidence="1">
    <location>
        <begin position="8"/>
        <end position="16"/>
    </location>
    <ligand>
        <name>ATP</name>
        <dbReference type="ChEBI" id="CHEBI:30616"/>
    </ligand>
</feature>